<dbReference type="EC" id="3.1.1.72"/>
<dbReference type="EMBL" id="D87681">
    <property type="protein sequence ID" value="BAA13434.2"/>
    <property type="molecule type" value="Genomic_DNA"/>
</dbReference>
<dbReference type="PDB" id="5X6S">
    <property type="method" value="X-ray"/>
    <property type="resolution" value="1.90 A"/>
    <property type="chains" value="A/B=30-304"/>
</dbReference>
<dbReference type="PDBsum" id="5X6S"/>
<dbReference type="SMR" id="Q92194"/>
<dbReference type="ESTHER" id="aspaw-AXE1">
    <property type="family name" value="Esterase_phb"/>
</dbReference>
<dbReference type="GlyCosmos" id="Q92194">
    <property type="glycosylation" value="1 site, No reported glycans"/>
</dbReference>
<dbReference type="UniPathway" id="UPA00114"/>
<dbReference type="GO" id="GO:0005576">
    <property type="term" value="C:extracellular region"/>
    <property type="evidence" value="ECO:0007669"/>
    <property type="project" value="UniProtKB-SubCell"/>
</dbReference>
<dbReference type="GO" id="GO:0046555">
    <property type="term" value="F:acetylxylan esterase activity"/>
    <property type="evidence" value="ECO:0007669"/>
    <property type="project" value="UniProtKB-EC"/>
</dbReference>
<dbReference type="GO" id="GO:0030245">
    <property type="term" value="P:cellulose catabolic process"/>
    <property type="evidence" value="ECO:0007669"/>
    <property type="project" value="UniProtKB-KW"/>
</dbReference>
<dbReference type="GO" id="GO:0045493">
    <property type="term" value="P:xylan catabolic process"/>
    <property type="evidence" value="ECO:0007669"/>
    <property type="project" value="UniProtKB-UniPathway"/>
</dbReference>
<dbReference type="Gene3D" id="3.40.50.1820">
    <property type="entry name" value="alpha/beta hydrolase"/>
    <property type="match status" value="1"/>
</dbReference>
<dbReference type="InterPro" id="IPR029058">
    <property type="entry name" value="AB_hydrolase_fold"/>
</dbReference>
<dbReference type="InterPro" id="IPR010126">
    <property type="entry name" value="Esterase_phb"/>
</dbReference>
<dbReference type="InterPro" id="IPR050955">
    <property type="entry name" value="Plant_Biomass_Hydrol_Est"/>
</dbReference>
<dbReference type="NCBIfam" id="TIGR01840">
    <property type="entry name" value="esterase_phb"/>
    <property type="match status" value="1"/>
</dbReference>
<dbReference type="PANTHER" id="PTHR43037:SF3">
    <property type="entry name" value="FERULOYL ESTERASE B"/>
    <property type="match status" value="1"/>
</dbReference>
<dbReference type="PANTHER" id="PTHR43037">
    <property type="entry name" value="UNNAMED PRODUCT-RELATED"/>
    <property type="match status" value="1"/>
</dbReference>
<dbReference type="Pfam" id="PF10503">
    <property type="entry name" value="Esterase_PHB"/>
    <property type="match status" value="1"/>
</dbReference>
<dbReference type="SUPFAM" id="SSF53474">
    <property type="entry name" value="alpha/beta-Hydrolases"/>
    <property type="match status" value="2"/>
</dbReference>
<reference key="1">
    <citation type="journal article" date="1997" name="Biochem. J.">
        <title>An Aspergillus awamori acetylesterase: purification of the enzyme, and cloning and sequencing of the gene.</title>
        <authorList>
            <person name="Koseki T."/>
            <person name="Furuse S."/>
            <person name="Iwano K."/>
            <person name="Sakai H."/>
            <person name="Matsuzawa H."/>
        </authorList>
    </citation>
    <scope>NUCLEOTIDE SEQUENCE [GENOMIC DNA]</scope>
    <scope>PROTEIN SEQUENCE OF 30-48; 245-254; 260-279 AND 298-304</scope>
    <scope>FUNCTION</scope>
    <scope>ACTIVITY REGULATION</scope>
    <scope>BIOPHYSICOCHEMICAL PROPERTIES</scope>
</reference>
<feature type="signal peptide" evidence="2">
    <location>
        <begin position="1"/>
        <end position="24"/>
    </location>
</feature>
<feature type="chain" id="PRO_0000393474" description="Acetylxylan esterase A">
    <location>
        <begin position="25"/>
        <end position="304"/>
    </location>
</feature>
<feature type="active site" description="Charge relay system" evidence="1">
    <location>
        <position position="148"/>
    </location>
</feature>
<feature type="glycosylation site" description="N-linked (GlcNAc...) asparagine" evidence="2">
    <location>
        <position position="190"/>
    </location>
</feature>
<feature type="strand" evidence="5">
    <location>
        <begin position="32"/>
        <end position="36"/>
    </location>
</feature>
<feature type="strand" evidence="5">
    <location>
        <begin position="47"/>
        <end position="52"/>
    </location>
</feature>
<feature type="strand" evidence="5">
    <location>
        <begin position="62"/>
        <end position="66"/>
    </location>
</feature>
<feature type="helix" evidence="5">
    <location>
        <begin position="73"/>
        <end position="78"/>
    </location>
</feature>
<feature type="helix" evidence="5">
    <location>
        <begin position="82"/>
        <end position="89"/>
    </location>
</feature>
<feature type="strand" evidence="5">
    <location>
        <begin position="92"/>
        <end position="97"/>
    </location>
</feature>
<feature type="turn" evidence="5">
    <location>
        <begin position="110"/>
        <end position="113"/>
    </location>
</feature>
<feature type="helix" evidence="5">
    <location>
        <begin position="120"/>
        <end position="135"/>
    </location>
</feature>
<feature type="strand" evidence="5">
    <location>
        <begin position="141"/>
        <end position="147"/>
    </location>
</feature>
<feature type="helix" evidence="5">
    <location>
        <begin position="149"/>
        <end position="160"/>
    </location>
</feature>
<feature type="helix" evidence="5">
    <location>
        <begin position="162"/>
        <end position="164"/>
    </location>
</feature>
<feature type="strand" evidence="5">
    <location>
        <begin position="166"/>
        <end position="172"/>
    </location>
</feature>
<feature type="turn" evidence="5">
    <location>
        <begin position="176"/>
        <end position="179"/>
    </location>
</feature>
<feature type="helix" evidence="5">
    <location>
        <begin position="191"/>
        <end position="194"/>
    </location>
</feature>
<feature type="helix" evidence="5">
    <location>
        <begin position="202"/>
        <end position="211"/>
    </location>
</feature>
<feature type="turn" evidence="5">
    <location>
        <begin position="212"/>
        <end position="215"/>
    </location>
</feature>
<feature type="strand" evidence="5">
    <location>
        <begin position="222"/>
        <end position="228"/>
    </location>
</feature>
<feature type="strand" evidence="5">
    <location>
        <begin position="232"/>
        <end position="234"/>
    </location>
</feature>
<feature type="helix" evidence="5">
    <location>
        <begin position="237"/>
        <end position="250"/>
    </location>
</feature>
<feature type="strand" evidence="5">
    <location>
        <begin position="258"/>
        <end position="261"/>
    </location>
</feature>
<feature type="strand" evidence="5">
    <location>
        <begin position="269"/>
        <end position="275"/>
    </location>
</feature>
<feature type="strand" evidence="5">
    <location>
        <begin position="278"/>
        <end position="283"/>
    </location>
</feature>
<feature type="helix" evidence="5">
    <location>
        <begin position="294"/>
        <end position="301"/>
    </location>
</feature>
<accession>Q92194</accession>
<evidence type="ECO:0000250" key="1"/>
<evidence type="ECO:0000255" key="2"/>
<evidence type="ECO:0000269" key="3">
    <source>
    </source>
</evidence>
<evidence type="ECO:0000305" key="4"/>
<evidence type="ECO:0007829" key="5">
    <source>
        <dbReference type="PDB" id="5X6S"/>
    </source>
</evidence>
<gene>
    <name type="primary">axeA</name>
    <name type="synonym">aceA</name>
</gene>
<sequence length="304" mass="32729">MLLSTHLLFVITTLVTSLLHPIDGHAVKRSGSLQQVTDFGDNPTNVGMYIYVPNNLASNPGIVVAIHYCTGTGPGYYGDSPYATLSEQYGFIVIYPSSPYSGGCWDVSSQATLTHNGGGNSNSIANMVTWTISKYGADSSKVFVTGSSSGAMMTNVMAATYPELFAAATVYSGVSAGCFYSNTNQVDGWNSTCAQGDVITTPEHWASIAEAMYSGYSGSRPRMQIYHGSIDTTLYPQNYYETCKQWAGVFGYDYSAPEKTEANTPQTNYETTIWGDSLQGIFATGVGHTVPIHGDKDMEWFGFA</sequence>
<comment type="function">
    <text evidence="3">Acetylxylan esterase involved in the hydrolysis of xylan, a major structural heterogeneous polysaccharide found in plant biomass representing the second most abundant polysaccharide in the biosphere, after cellulose. Degrades acetylated xylans by cleaving acetyl side groups from the hetero-xylan backbone.</text>
</comment>
<comment type="catalytic activity">
    <reaction>
        <text>Deacetylation of xylans and xylo-oligosaccharides.</text>
        <dbReference type="EC" id="3.1.1.72"/>
    </reaction>
</comment>
<comment type="activity regulation">
    <text evidence="3">Inactivated by di-isopropylfluorophosphate and phenylmethylsulfonylfluorid (PMSF), a specific inhibitor of serine esterases.</text>
</comment>
<comment type="biophysicochemical properties">
    <phDependence>
        <text evidence="3">Optimum pH is 7.0. Activity is significantly retained from pH 6.0 to 9.0.</text>
    </phDependence>
    <temperatureDependence>
        <text evidence="3">Activity is decreased at temperatures higher than 40 degrees Celsius.</text>
    </temperatureDependence>
</comment>
<comment type="pathway">
    <text>Glycan degradation; xylan degradation.</text>
</comment>
<comment type="subunit">
    <text evidence="1">Monomer.</text>
</comment>
<comment type="subcellular location">
    <subcellularLocation>
        <location evidence="1">Secreted</location>
    </subcellularLocation>
</comment>
<comment type="similarity">
    <text evidence="4">Belongs to the carbohydrate esterase 1 (CE1) family. AxeA subfamily.</text>
</comment>
<comment type="caution">
    <text evidence="4">The C-terminal carbohydrate-binding module (CBM) extension found in some acetylxylan esterases from other species is absent.</text>
</comment>
<proteinExistence type="evidence at protein level"/>
<organism>
    <name type="scientific">Aspergillus awamori</name>
    <name type="common">Black koji mold</name>
    <dbReference type="NCBI Taxonomy" id="105351"/>
    <lineage>
        <taxon>Eukaryota</taxon>
        <taxon>Fungi</taxon>
        <taxon>Dikarya</taxon>
        <taxon>Ascomycota</taxon>
        <taxon>Pezizomycotina</taxon>
        <taxon>Eurotiomycetes</taxon>
        <taxon>Eurotiomycetidae</taxon>
        <taxon>Eurotiales</taxon>
        <taxon>Aspergillaceae</taxon>
        <taxon>Aspergillus</taxon>
    </lineage>
</organism>
<keyword id="KW-0002">3D-structure</keyword>
<keyword id="KW-0119">Carbohydrate metabolism</keyword>
<keyword id="KW-0136">Cellulose degradation</keyword>
<keyword id="KW-0903">Direct protein sequencing</keyword>
<keyword id="KW-0325">Glycoprotein</keyword>
<keyword id="KW-0378">Hydrolase</keyword>
<keyword id="KW-0624">Polysaccharide degradation</keyword>
<keyword id="KW-0964">Secreted</keyword>
<keyword id="KW-0719">Serine esterase</keyword>
<keyword id="KW-0732">Signal</keyword>
<name>AXE1_ASPAW</name>
<protein>
    <recommendedName>
        <fullName>Acetylxylan esterase A</fullName>
        <ecNumber>3.1.1.72</ecNumber>
    </recommendedName>
</protein>